<reference key="1">
    <citation type="journal article" date="2005" name="J. Bacteriol.">
        <title>The genome of Sulfolobus acidocaldarius, a model organism of the Crenarchaeota.</title>
        <authorList>
            <person name="Chen L."/>
            <person name="Bruegger K."/>
            <person name="Skovgaard M."/>
            <person name="Redder P."/>
            <person name="She Q."/>
            <person name="Torarinsson E."/>
            <person name="Greve B."/>
            <person name="Awayez M."/>
            <person name="Zibat A."/>
            <person name="Klenk H.-P."/>
            <person name="Garrett R.A."/>
        </authorList>
    </citation>
    <scope>NUCLEOTIDE SEQUENCE [LARGE SCALE GENOMIC DNA]</scope>
    <source>
        <strain>ATCC 33909 / DSM 639 / JCM 8929 / NBRC 15157 / NCIMB 11770</strain>
    </source>
</reference>
<gene>
    <name evidence="1" type="primary">gltX</name>
    <name type="ordered locus">Saci_1519</name>
</gene>
<keyword id="KW-0030">Aminoacyl-tRNA synthetase</keyword>
<keyword id="KW-0067">ATP-binding</keyword>
<keyword id="KW-0963">Cytoplasm</keyword>
<keyword id="KW-0436">Ligase</keyword>
<keyword id="KW-0547">Nucleotide-binding</keyword>
<keyword id="KW-0648">Protein biosynthesis</keyword>
<keyword id="KW-1185">Reference proteome</keyword>
<organism>
    <name type="scientific">Sulfolobus acidocaldarius (strain ATCC 33909 / DSM 639 / JCM 8929 / NBRC 15157 / NCIMB 11770)</name>
    <dbReference type="NCBI Taxonomy" id="330779"/>
    <lineage>
        <taxon>Archaea</taxon>
        <taxon>Thermoproteota</taxon>
        <taxon>Thermoprotei</taxon>
        <taxon>Sulfolobales</taxon>
        <taxon>Sulfolobaceae</taxon>
        <taxon>Sulfolobus</taxon>
    </lineage>
</organism>
<sequence length="567" mass="65094">MSDDIRNLVYKYALHNAYTHNGKANVNAVVSKIFAERPELRSKAKDIVEIAKELVNYVNSLDVESQKKELESKFPEMLEEKKREKESKKELPDIPVSGVLVTRFAPNPDGPLHLGNARAAIISHEYARIYNGKFILRFDDTDPKTKKPIPEAYDWIKEDLKWLGIKWDLEVRASARLETYYNFARILLSKGYAYIDLCKEAEFKERRSKREACPHRETSPESNLELFEKMIHGEFEEGKAVVRLKTDLKLPDPSQRDWVLLRVINVKKSPHPIEGDKYWVWPTYNFASAIDDYDLGVTHIFRGKEHAVNAEKQKWIYNYMGWKYPYVREFGRLKLEGFMMSKSKIRTVVEKGVGIDDPRLPTLAGLRRRGILSDTIKEIIITVGLKETDATISFDNLASTNRKKLDKIAKRLMFVGSPKEFIIDIPQPILAKIPYHPSNPNEYREISVNPGDIILINENDAKDKVLRLMELCNVTVNGDKLVYNSKGIEDAKKLGMKIIQWVKKDESVPVVVLSPDPEKGIETINGVGESEIRNLNKGEIVQFIRYGFVKVDEKSADGQVTVIFSHE</sequence>
<evidence type="ECO:0000255" key="1">
    <source>
        <dbReference type="HAMAP-Rule" id="MF_02076"/>
    </source>
</evidence>
<comment type="function">
    <text evidence="1">Catalyzes the attachment of glutamate to tRNA(Glu) in a two-step reaction: glutamate is first activated by ATP to form Glu-AMP and then transferred to the acceptor end of tRNA(Glu).</text>
</comment>
<comment type="catalytic activity">
    <reaction evidence="1">
        <text>tRNA(Glu) + L-glutamate + ATP = L-glutamyl-tRNA(Glu) + AMP + diphosphate</text>
        <dbReference type="Rhea" id="RHEA:23540"/>
        <dbReference type="Rhea" id="RHEA-COMP:9663"/>
        <dbReference type="Rhea" id="RHEA-COMP:9680"/>
        <dbReference type="ChEBI" id="CHEBI:29985"/>
        <dbReference type="ChEBI" id="CHEBI:30616"/>
        <dbReference type="ChEBI" id="CHEBI:33019"/>
        <dbReference type="ChEBI" id="CHEBI:78442"/>
        <dbReference type="ChEBI" id="CHEBI:78520"/>
        <dbReference type="ChEBI" id="CHEBI:456215"/>
        <dbReference type="EC" id="6.1.1.17"/>
    </reaction>
</comment>
<comment type="subcellular location">
    <subcellularLocation>
        <location evidence="1">Cytoplasm</location>
    </subcellularLocation>
</comment>
<comment type="similarity">
    <text evidence="1">Belongs to the class-I aminoacyl-tRNA synthetase family. Glutamate--tRNA ligase type 2 subfamily.</text>
</comment>
<dbReference type="EC" id="6.1.1.17" evidence="1"/>
<dbReference type="EMBL" id="CP000077">
    <property type="protein sequence ID" value="AAY80838.1"/>
    <property type="molecule type" value="Genomic_DNA"/>
</dbReference>
<dbReference type="RefSeq" id="WP_011278340.1">
    <property type="nucleotide sequence ID" value="NC_007181.1"/>
</dbReference>
<dbReference type="SMR" id="Q4J8P2"/>
<dbReference type="STRING" id="330779.Saci_1519"/>
<dbReference type="GeneID" id="14552017"/>
<dbReference type="KEGG" id="sai:Saci_1519"/>
<dbReference type="PATRIC" id="fig|330779.12.peg.1463"/>
<dbReference type="eggNOG" id="arCOG04302">
    <property type="taxonomic scope" value="Archaea"/>
</dbReference>
<dbReference type="HOGENOM" id="CLU_001882_1_3_2"/>
<dbReference type="Proteomes" id="UP000001018">
    <property type="component" value="Chromosome"/>
</dbReference>
<dbReference type="GO" id="GO:0005829">
    <property type="term" value="C:cytosol"/>
    <property type="evidence" value="ECO:0007669"/>
    <property type="project" value="TreeGrafter"/>
</dbReference>
<dbReference type="GO" id="GO:0005524">
    <property type="term" value="F:ATP binding"/>
    <property type="evidence" value="ECO:0007669"/>
    <property type="project" value="UniProtKB-UniRule"/>
</dbReference>
<dbReference type="GO" id="GO:0004818">
    <property type="term" value="F:glutamate-tRNA ligase activity"/>
    <property type="evidence" value="ECO:0007669"/>
    <property type="project" value="UniProtKB-UniRule"/>
</dbReference>
<dbReference type="GO" id="GO:0043604">
    <property type="term" value="P:amide biosynthetic process"/>
    <property type="evidence" value="ECO:0007669"/>
    <property type="project" value="TreeGrafter"/>
</dbReference>
<dbReference type="GO" id="GO:0006424">
    <property type="term" value="P:glutamyl-tRNA aminoacylation"/>
    <property type="evidence" value="ECO:0007669"/>
    <property type="project" value="UniProtKB-UniRule"/>
</dbReference>
<dbReference type="Gene3D" id="2.40.240.100">
    <property type="match status" value="1"/>
</dbReference>
<dbReference type="Gene3D" id="3.40.50.620">
    <property type="entry name" value="HUPs"/>
    <property type="match status" value="1"/>
</dbReference>
<dbReference type="Gene3D" id="2.40.240.10">
    <property type="entry name" value="Ribosomal Protein L25, Chain P"/>
    <property type="match status" value="1"/>
</dbReference>
<dbReference type="HAMAP" id="MF_02076">
    <property type="entry name" value="Glu_tRNA_synth_type2"/>
    <property type="match status" value="1"/>
</dbReference>
<dbReference type="InterPro" id="IPR050132">
    <property type="entry name" value="Gln/Glu-tRNA_Ligase"/>
</dbReference>
<dbReference type="InterPro" id="IPR004526">
    <property type="entry name" value="Glu-tRNA-synth_arc/euk"/>
</dbReference>
<dbReference type="InterPro" id="IPR000924">
    <property type="entry name" value="Glu/Gln-tRNA-synth"/>
</dbReference>
<dbReference type="InterPro" id="IPR020058">
    <property type="entry name" value="Glu/Gln-tRNA-synth_Ib_cat-dom"/>
</dbReference>
<dbReference type="InterPro" id="IPR020059">
    <property type="entry name" value="Glu/Gln-tRNA-synth_Ib_codon-bd"/>
</dbReference>
<dbReference type="InterPro" id="IPR020056">
    <property type="entry name" value="Rbsml_bL25/Gln-tRNA_synth_N"/>
</dbReference>
<dbReference type="InterPro" id="IPR011035">
    <property type="entry name" value="Ribosomal_bL25/Gln-tRNA_synth"/>
</dbReference>
<dbReference type="InterPro" id="IPR014729">
    <property type="entry name" value="Rossmann-like_a/b/a_fold"/>
</dbReference>
<dbReference type="InterPro" id="IPR049437">
    <property type="entry name" value="tRNA-synt_1c_C2"/>
</dbReference>
<dbReference type="NCBIfam" id="TIGR00463">
    <property type="entry name" value="gltX_arch"/>
    <property type="match status" value="1"/>
</dbReference>
<dbReference type="NCBIfam" id="NF003169">
    <property type="entry name" value="PRK04156.1"/>
    <property type="match status" value="1"/>
</dbReference>
<dbReference type="PANTHER" id="PTHR43097:SF5">
    <property type="entry name" value="GLUTAMATE--TRNA LIGASE"/>
    <property type="match status" value="1"/>
</dbReference>
<dbReference type="PANTHER" id="PTHR43097">
    <property type="entry name" value="GLUTAMINE-TRNA LIGASE"/>
    <property type="match status" value="1"/>
</dbReference>
<dbReference type="Pfam" id="PF00749">
    <property type="entry name" value="tRNA-synt_1c"/>
    <property type="match status" value="1"/>
</dbReference>
<dbReference type="Pfam" id="PF03950">
    <property type="entry name" value="tRNA-synt_1c_C"/>
    <property type="match status" value="1"/>
</dbReference>
<dbReference type="Pfam" id="PF20974">
    <property type="entry name" value="tRNA-synt_1c_C2"/>
    <property type="match status" value="1"/>
</dbReference>
<dbReference type="PRINTS" id="PR00987">
    <property type="entry name" value="TRNASYNTHGLU"/>
</dbReference>
<dbReference type="SUPFAM" id="SSF52374">
    <property type="entry name" value="Nucleotidylyl transferase"/>
    <property type="match status" value="1"/>
</dbReference>
<dbReference type="SUPFAM" id="SSF50715">
    <property type="entry name" value="Ribosomal protein L25-like"/>
    <property type="match status" value="1"/>
</dbReference>
<feature type="chain" id="PRO_0000119730" description="Glutamate--tRNA ligase">
    <location>
        <begin position="1"/>
        <end position="567"/>
    </location>
</feature>
<feature type="short sequence motif" description="'HIGH' region" evidence="1">
    <location>
        <begin position="106"/>
        <end position="116"/>
    </location>
</feature>
<protein>
    <recommendedName>
        <fullName evidence="1">Glutamate--tRNA ligase</fullName>
        <ecNumber evidence="1">6.1.1.17</ecNumber>
    </recommendedName>
    <alternativeName>
        <fullName evidence="1">Glutamyl-tRNA synthetase</fullName>
        <shortName evidence="1">GluRS</shortName>
    </alternativeName>
</protein>
<name>SYE_SULAC</name>
<accession>Q4J8P2</accession>
<proteinExistence type="inferred from homology"/>